<proteinExistence type="inferred from homology"/>
<sequence length="860" mass="97782">MQEQYRPEDIEQTIQEHWEKNNTFKVTEDNNKEKYYCLSMLPYPSGRLHMGHVRNYTIGDVISRYQRMLGKNVLQPIGWDAFGLPAEGAAVKNNTAPAPWTYENINYMKGQLKKLGFGYDWDREVTTCTPEYYRWEQWFFTKLYEKGLVYKKTSAVNWCPHDLTVLANEQVIDGCCWRCDTPVERKEIPQWFIKITDYAEELLNDLDTLDEWPEQVKTMQRNWIGRSEGVEITFDVADSDDTMTVYTTRPDTFMGVTYVAVAAGHPLAQKAAQNNPEIQHFIDECRNMKMAEAEMATMEKKGIATGLYAIHPLTQEKVAIWVANFVLMEYGTGAVMAVPGHDERDWEFATKYGLPIKAVIADAEGNQPDLSTGALTEKNSLINSGEFSGLDNQAGFNAIADKLTAMGVGERKVNYRLRDWGVSRQRYWGAPIPMATLEDGSVVPVPDDQLPVILPEDVKMDGITSPIKADPEWAKTTINGQPALRETDTFDTFMESSWYYARYTCPDYDKGMLDPKAANYWLPVDWYIGGIEHAIMHLMYFRFFHKLMRDAGLVNSDEPAKRLLCQGMVLADAFYYTGEDGARHWVSPAEAIVERDEKNRIIKATDSAGHELTYAGMSKMSKSKNNGIDPQTMVERYGADTVRLFMMFAAPPELTLEWQESSVEGANRFLRRLWRLVHEHTEKGTTQSLDLATLTTEQKDLRRDLHKTIAKVSDDVGRRLAFNTAIAAIMELMNKLTRAPQETEQDRALMQEALEAVVRMLSPIIPHACFVMWQALGGKEDIDVAPWPVADEEAMVDDTKLIIVQVNGKVRGRITVPANSEKDYVQEMATKEYSVAKYLENVTVRKVIYVPGKLLNIVVG</sequence>
<reference key="1">
    <citation type="journal article" date="2008" name="J. Bacteriol.">
        <title>Complete genome sequence of uropathogenic Proteus mirabilis, a master of both adherence and motility.</title>
        <authorList>
            <person name="Pearson M.M."/>
            <person name="Sebaihia M."/>
            <person name="Churcher C."/>
            <person name="Quail M.A."/>
            <person name="Seshasayee A.S."/>
            <person name="Luscombe N.M."/>
            <person name="Abdellah Z."/>
            <person name="Arrosmith C."/>
            <person name="Atkin B."/>
            <person name="Chillingworth T."/>
            <person name="Hauser H."/>
            <person name="Jagels K."/>
            <person name="Moule S."/>
            <person name="Mungall K."/>
            <person name="Norbertczak H."/>
            <person name="Rabbinowitsch E."/>
            <person name="Walker D."/>
            <person name="Whithead S."/>
            <person name="Thomson N.R."/>
            <person name="Rather P.N."/>
            <person name="Parkhill J."/>
            <person name="Mobley H.L.T."/>
        </authorList>
    </citation>
    <scope>NUCLEOTIDE SEQUENCE [LARGE SCALE GENOMIC DNA]</scope>
    <source>
        <strain>HI4320</strain>
    </source>
</reference>
<organism>
    <name type="scientific">Proteus mirabilis (strain HI4320)</name>
    <dbReference type="NCBI Taxonomy" id="529507"/>
    <lineage>
        <taxon>Bacteria</taxon>
        <taxon>Pseudomonadati</taxon>
        <taxon>Pseudomonadota</taxon>
        <taxon>Gammaproteobacteria</taxon>
        <taxon>Enterobacterales</taxon>
        <taxon>Morganellaceae</taxon>
        <taxon>Proteus</taxon>
    </lineage>
</organism>
<evidence type="ECO:0000255" key="1">
    <source>
        <dbReference type="HAMAP-Rule" id="MF_00049"/>
    </source>
</evidence>
<feature type="chain" id="PRO_1000091346" description="Leucine--tRNA ligase">
    <location>
        <begin position="1"/>
        <end position="860"/>
    </location>
</feature>
<feature type="short sequence motif" description="'HIGH' region">
    <location>
        <begin position="42"/>
        <end position="52"/>
    </location>
</feature>
<feature type="short sequence motif" description="'KMSKS' region">
    <location>
        <begin position="619"/>
        <end position="623"/>
    </location>
</feature>
<feature type="binding site" evidence="1">
    <location>
        <position position="622"/>
    </location>
    <ligand>
        <name>ATP</name>
        <dbReference type="ChEBI" id="CHEBI:30616"/>
    </ligand>
</feature>
<comment type="catalytic activity">
    <reaction evidence="1">
        <text>tRNA(Leu) + L-leucine + ATP = L-leucyl-tRNA(Leu) + AMP + diphosphate</text>
        <dbReference type="Rhea" id="RHEA:11688"/>
        <dbReference type="Rhea" id="RHEA-COMP:9613"/>
        <dbReference type="Rhea" id="RHEA-COMP:9622"/>
        <dbReference type="ChEBI" id="CHEBI:30616"/>
        <dbReference type="ChEBI" id="CHEBI:33019"/>
        <dbReference type="ChEBI" id="CHEBI:57427"/>
        <dbReference type="ChEBI" id="CHEBI:78442"/>
        <dbReference type="ChEBI" id="CHEBI:78494"/>
        <dbReference type="ChEBI" id="CHEBI:456215"/>
        <dbReference type="EC" id="6.1.1.4"/>
    </reaction>
</comment>
<comment type="subcellular location">
    <subcellularLocation>
        <location evidence="1">Cytoplasm</location>
    </subcellularLocation>
</comment>
<comment type="similarity">
    <text evidence="1">Belongs to the class-I aminoacyl-tRNA synthetase family.</text>
</comment>
<keyword id="KW-0030">Aminoacyl-tRNA synthetase</keyword>
<keyword id="KW-0067">ATP-binding</keyword>
<keyword id="KW-0963">Cytoplasm</keyword>
<keyword id="KW-0436">Ligase</keyword>
<keyword id="KW-0547">Nucleotide-binding</keyword>
<keyword id="KW-0648">Protein biosynthesis</keyword>
<keyword id="KW-1185">Reference proteome</keyword>
<protein>
    <recommendedName>
        <fullName evidence="1">Leucine--tRNA ligase</fullName>
        <ecNumber evidence="1">6.1.1.4</ecNumber>
    </recommendedName>
    <alternativeName>
        <fullName evidence="1">Leucyl-tRNA synthetase</fullName>
        <shortName evidence="1">LeuRS</shortName>
    </alternativeName>
</protein>
<gene>
    <name evidence="1" type="primary">leuS</name>
    <name type="ordered locus">PMI0433</name>
</gene>
<name>SYL_PROMH</name>
<dbReference type="EC" id="6.1.1.4" evidence="1"/>
<dbReference type="EMBL" id="AM942759">
    <property type="protein sequence ID" value="CAR41076.1"/>
    <property type="molecule type" value="Genomic_DNA"/>
</dbReference>
<dbReference type="RefSeq" id="WP_004247439.1">
    <property type="nucleotide sequence ID" value="NC_010554.1"/>
</dbReference>
<dbReference type="SMR" id="B4EV14"/>
<dbReference type="EnsemblBacteria" id="CAR41076">
    <property type="protein sequence ID" value="CAR41076"/>
    <property type="gene ID" value="PMI0433"/>
</dbReference>
<dbReference type="GeneID" id="6802424"/>
<dbReference type="KEGG" id="pmr:PMI0433"/>
<dbReference type="eggNOG" id="COG0495">
    <property type="taxonomic scope" value="Bacteria"/>
</dbReference>
<dbReference type="HOGENOM" id="CLU_004427_0_0_6"/>
<dbReference type="Proteomes" id="UP000008319">
    <property type="component" value="Chromosome"/>
</dbReference>
<dbReference type="GO" id="GO:0005829">
    <property type="term" value="C:cytosol"/>
    <property type="evidence" value="ECO:0007669"/>
    <property type="project" value="TreeGrafter"/>
</dbReference>
<dbReference type="GO" id="GO:0002161">
    <property type="term" value="F:aminoacyl-tRNA deacylase activity"/>
    <property type="evidence" value="ECO:0007669"/>
    <property type="project" value="InterPro"/>
</dbReference>
<dbReference type="GO" id="GO:0005524">
    <property type="term" value="F:ATP binding"/>
    <property type="evidence" value="ECO:0007669"/>
    <property type="project" value="UniProtKB-UniRule"/>
</dbReference>
<dbReference type="GO" id="GO:0004823">
    <property type="term" value="F:leucine-tRNA ligase activity"/>
    <property type="evidence" value="ECO:0007669"/>
    <property type="project" value="UniProtKB-UniRule"/>
</dbReference>
<dbReference type="GO" id="GO:0006429">
    <property type="term" value="P:leucyl-tRNA aminoacylation"/>
    <property type="evidence" value="ECO:0007669"/>
    <property type="project" value="UniProtKB-UniRule"/>
</dbReference>
<dbReference type="CDD" id="cd07958">
    <property type="entry name" value="Anticodon_Ia_Leu_BEm"/>
    <property type="match status" value="1"/>
</dbReference>
<dbReference type="CDD" id="cd00812">
    <property type="entry name" value="LeuRS_core"/>
    <property type="match status" value="1"/>
</dbReference>
<dbReference type="FunFam" id="1.10.730.10:FF:000002">
    <property type="entry name" value="Leucine--tRNA ligase"/>
    <property type="match status" value="1"/>
</dbReference>
<dbReference type="FunFam" id="2.20.28.290:FF:000001">
    <property type="entry name" value="Leucine--tRNA ligase"/>
    <property type="match status" value="1"/>
</dbReference>
<dbReference type="FunFam" id="3.10.20.590:FF:000001">
    <property type="entry name" value="Leucine--tRNA ligase"/>
    <property type="match status" value="1"/>
</dbReference>
<dbReference type="FunFam" id="3.40.50.620:FF:000003">
    <property type="entry name" value="Leucine--tRNA ligase"/>
    <property type="match status" value="1"/>
</dbReference>
<dbReference type="FunFam" id="3.40.50.620:FF:000124">
    <property type="entry name" value="Leucine--tRNA ligase"/>
    <property type="match status" value="1"/>
</dbReference>
<dbReference type="FunFam" id="3.90.740.10:FF:000012">
    <property type="entry name" value="Leucine--tRNA ligase"/>
    <property type="match status" value="1"/>
</dbReference>
<dbReference type="Gene3D" id="2.20.28.290">
    <property type="match status" value="1"/>
</dbReference>
<dbReference type="Gene3D" id="3.10.20.590">
    <property type="match status" value="1"/>
</dbReference>
<dbReference type="Gene3D" id="3.40.50.620">
    <property type="entry name" value="HUPs"/>
    <property type="match status" value="2"/>
</dbReference>
<dbReference type="Gene3D" id="1.10.730.10">
    <property type="entry name" value="Isoleucyl-tRNA Synthetase, Domain 1"/>
    <property type="match status" value="1"/>
</dbReference>
<dbReference type="Gene3D" id="3.90.740.10">
    <property type="entry name" value="Valyl/Leucyl/Isoleucyl-tRNA synthetase, editing domain"/>
    <property type="match status" value="1"/>
</dbReference>
<dbReference type="HAMAP" id="MF_00049_B">
    <property type="entry name" value="Leu_tRNA_synth_B"/>
    <property type="match status" value="1"/>
</dbReference>
<dbReference type="InterPro" id="IPR001412">
    <property type="entry name" value="aa-tRNA-synth_I_CS"/>
</dbReference>
<dbReference type="InterPro" id="IPR002300">
    <property type="entry name" value="aa-tRNA-synth_Ia"/>
</dbReference>
<dbReference type="InterPro" id="IPR002302">
    <property type="entry name" value="Leu-tRNA-ligase"/>
</dbReference>
<dbReference type="InterPro" id="IPR025709">
    <property type="entry name" value="Leu_tRNA-synth_edit"/>
</dbReference>
<dbReference type="InterPro" id="IPR013155">
    <property type="entry name" value="M/V/L/I-tRNA-synth_anticd-bd"/>
</dbReference>
<dbReference type="InterPro" id="IPR015413">
    <property type="entry name" value="Methionyl/Leucyl_tRNA_Synth"/>
</dbReference>
<dbReference type="InterPro" id="IPR014729">
    <property type="entry name" value="Rossmann-like_a/b/a_fold"/>
</dbReference>
<dbReference type="InterPro" id="IPR009080">
    <property type="entry name" value="tRNAsynth_Ia_anticodon-bd"/>
</dbReference>
<dbReference type="InterPro" id="IPR009008">
    <property type="entry name" value="Val/Leu/Ile-tRNA-synth_edit"/>
</dbReference>
<dbReference type="NCBIfam" id="TIGR00396">
    <property type="entry name" value="leuS_bact"/>
    <property type="match status" value="1"/>
</dbReference>
<dbReference type="PANTHER" id="PTHR43740:SF2">
    <property type="entry name" value="LEUCINE--TRNA LIGASE, MITOCHONDRIAL"/>
    <property type="match status" value="1"/>
</dbReference>
<dbReference type="PANTHER" id="PTHR43740">
    <property type="entry name" value="LEUCYL-TRNA SYNTHETASE"/>
    <property type="match status" value="1"/>
</dbReference>
<dbReference type="Pfam" id="PF08264">
    <property type="entry name" value="Anticodon_1"/>
    <property type="match status" value="1"/>
</dbReference>
<dbReference type="Pfam" id="PF00133">
    <property type="entry name" value="tRNA-synt_1"/>
    <property type="match status" value="2"/>
</dbReference>
<dbReference type="Pfam" id="PF13603">
    <property type="entry name" value="tRNA-synt_1_2"/>
    <property type="match status" value="1"/>
</dbReference>
<dbReference type="Pfam" id="PF09334">
    <property type="entry name" value="tRNA-synt_1g"/>
    <property type="match status" value="1"/>
</dbReference>
<dbReference type="PRINTS" id="PR00985">
    <property type="entry name" value="TRNASYNTHLEU"/>
</dbReference>
<dbReference type="SUPFAM" id="SSF47323">
    <property type="entry name" value="Anticodon-binding domain of a subclass of class I aminoacyl-tRNA synthetases"/>
    <property type="match status" value="1"/>
</dbReference>
<dbReference type="SUPFAM" id="SSF52374">
    <property type="entry name" value="Nucleotidylyl transferase"/>
    <property type="match status" value="1"/>
</dbReference>
<dbReference type="SUPFAM" id="SSF50677">
    <property type="entry name" value="ValRS/IleRS/LeuRS editing domain"/>
    <property type="match status" value="1"/>
</dbReference>
<dbReference type="PROSITE" id="PS00178">
    <property type="entry name" value="AA_TRNA_LIGASE_I"/>
    <property type="match status" value="1"/>
</dbReference>
<accession>B4EV14</accession>